<sequence length="25" mass="2637">GLFKVLGSVAKHLLPHVAPVIAEKL</sequence>
<feature type="peptide" id="PRO_0000010182" description="Caerin-1.7">
    <location>
        <begin position="1"/>
        <end position="25"/>
    </location>
</feature>
<feature type="peptide" id="PRO_0000010183" description="Caerin-1.7.1">
    <location>
        <begin position="3"/>
        <end position="25"/>
    </location>
</feature>
<feature type="modified residue" description="Leucine amide" evidence="2">
    <location>
        <position position="25"/>
    </location>
</feature>
<name>CR17_RANCH</name>
<organism>
    <name type="scientific">Ranoidea chloris</name>
    <name type="common">Red-eyed tree frog</name>
    <name type="synonym">Litoria chloris</name>
    <dbReference type="NCBI Taxonomy" id="86064"/>
    <lineage>
        <taxon>Eukaryota</taxon>
        <taxon>Metazoa</taxon>
        <taxon>Chordata</taxon>
        <taxon>Craniata</taxon>
        <taxon>Vertebrata</taxon>
        <taxon>Euteleostomi</taxon>
        <taxon>Amphibia</taxon>
        <taxon>Batrachia</taxon>
        <taxon>Anura</taxon>
        <taxon>Neobatrachia</taxon>
        <taxon>Hyloidea</taxon>
        <taxon>Hylidae</taxon>
        <taxon>Pelodryadinae</taxon>
        <taxon>Ranoidea</taxon>
    </lineage>
</organism>
<dbReference type="SMR" id="P62549"/>
<dbReference type="GO" id="GO:0005576">
    <property type="term" value="C:extracellular region"/>
    <property type="evidence" value="ECO:0007669"/>
    <property type="project" value="UniProtKB-SubCell"/>
</dbReference>
<dbReference type="GO" id="GO:0042742">
    <property type="term" value="P:defense response to bacterium"/>
    <property type="evidence" value="ECO:0007669"/>
    <property type="project" value="UniProtKB-KW"/>
</dbReference>
<dbReference type="InterPro" id="IPR010000">
    <property type="entry name" value="Caerin_1"/>
</dbReference>
<dbReference type="Pfam" id="PF07440">
    <property type="entry name" value="Caerin_1"/>
    <property type="match status" value="1"/>
</dbReference>
<accession>P62549</accession>
<accession>P56232</accession>
<accession>P81250</accession>
<evidence type="ECO:0000250" key="1"/>
<evidence type="ECO:0000269" key="2">
    <source>
    </source>
</evidence>
<evidence type="ECO:0000305" key="3"/>
<reference key="1">
    <citation type="journal article" date="1998" name="J. Pept. Res.">
        <title>New antibiotic caerin 1 peptides from the skin secretion of the Australian tree frog Litoria chloris. Comparison of the activities of the caerin 1 peptides from the genus Litoria.</title>
        <authorList>
            <person name="Steinborner S.T."/>
            <person name="Currie G.J."/>
            <person name="Bowie J.H."/>
            <person name="Wallace J.C."/>
            <person name="Tyler M.J."/>
        </authorList>
    </citation>
    <scope>PROTEIN SEQUENCE</scope>
    <scope>AMIDATION AT LEU-25</scope>
    <source>
        <tissue>Skin secretion</tissue>
    </source>
</reference>
<protein>
    <recommendedName>
        <fullName>Caerin-1.7</fullName>
    </recommendedName>
    <component>
        <recommendedName>
            <fullName>Caerin-1.7.1</fullName>
        </recommendedName>
    </component>
</protein>
<comment type="function">
    <text>Antibacterial peptide, that adopts an alpha helical conformation which can disrupt bacterial membranes. Each caerin displays a different antimicrobial specificity.</text>
</comment>
<comment type="subcellular location">
    <subcellularLocation>
        <location>Secreted</location>
    </subcellularLocation>
</comment>
<comment type="tissue specificity">
    <text>Expressed by the skin dorsal glands.</text>
</comment>
<comment type="domain">
    <text evidence="1">Contains two amphipathic alpha helix regions separated by a region of less-defined helicity and greater flexibility.</text>
</comment>
<comment type="PTM">
    <text>Caerin-1.7.1 does not have any antibacterial activity.</text>
</comment>
<comment type="similarity">
    <text evidence="3">Belongs to the frog skin active peptide (FSAP) family. Caerin subfamily.</text>
</comment>
<proteinExistence type="evidence at protein level"/>
<keyword id="KW-0027">Amidation</keyword>
<keyword id="KW-0878">Amphibian defense peptide</keyword>
<keyword id="KW-0044">Antibiotic</keyword>
<keyword id="KW-0929">Antimicrobial</keyword>
<keyword id="KW-0903">Direct protein sequencing</keyword>
<keyword id="KW-0964">Secreted</keyword>